<feature type="chain" id="PRO_0000117903" description="NADH-ubiquinone oxidoreductase chain 4">
    <location>
        <begin position="1" status="less than"/>
        <end position="231" status="greater than"/>
    </location>
</feature>
<feature type="transmembrane region" description="Helical" evidence="2">
    <location>
        <begin position="1"/>
        <end position="21"/>
    </location>
</feature>
<feature type="transmembrane region" description="Helical" evidence="2">
    <location>
        <begin position="34"/>
        <end position="54"/>
    </location>
</feature>
<feature type="transmembrane region" description="Helical" evidence="2">
    <location>
        <begin position="62"/>
        <end position="84"/>
    </location>
</feature>
<feature type="transmembrane region" description="Helical" evidence="2">
    <location>
        <begin position="89"/>
        <end position="111"/>
    </location>
</feature>
<feature type="transmembrane region" description="Helical" evidence="2">
    <location>
        <begin position="128"/>
        <end position="148"/>
    </location>
</feature>
<feature type="transmembrane region" description="Helical" evidence="2">
    <location>
        <begin position="169"/>
        <end position="189"/>
    </location>
</feature>
<feature type="non-terminal residue">
    <location>
        <position position="1"/>
    </location>
</feature>
<feature type="non-terminal residue">
    <location>
        <position position="231"/>
    </location>
</feature>
<evidence type="ECO:0000250" key="1"/>
<evidence type="ECO:0000255" key="2"/>
<evidence type="ECO:0000305" key="3"/>
<geneLocation type="mitochondrion"/>
<keyword id="KW-0249">Electron transport</keyword>
<keyword id="KW-0472">Membrane</keyword>
<keyword id="KW-0496">Mitochondrion</keyword>
<keyword id="KW-0520">NAD</keyword>
<keyword id="KW-0679">Respiratory chain</keyword>
<keyword id="KW-1278">Translocase</keyword>
<keyword id="KW-0812">Transmembrane</keyword>
<keyword id="KW-1133">Transmembrane helix</keyword>
<keyword id="KW-0813">Transport</keyword>
<keyword id="KW-0830">Ubiquinone</keyword>
<comment type="function">
    <text evidence="1">Core subunit of the mitochondrial membrane respiratory chain NADH dehydrogenase (Complex I) that is believed to belong to the minimal assembly required for catalysis. Complex I functions in the transfer of electrons from NADH to the respiratory chain. The immediate electron acceptor for the enzyme is believed to be ubiquinone (By similarity).</text>
</comment>
<comment type="catalytic activity">
    <reaction>
        <text>a ubiquinone + NADH + 5 H(+)(in) = a ubiquinol + NAD(+) + 4 H(+)(out)</text>
        <dbReference type="Rhea" id="RHEA:29091"/>
        <dbReference type="Rhea" id="RHEA-COMP:9565"/>
        <dbReference type="Rhea" id="RHEA-COMP:9566"/>
        <dbReference type="ChEBI" id="CHEBI:15378"/>
        <dbReference type="ChEBI" id="CHEBI:16389"/>
        <dbReference type="ChEBI" id="CHEBI:17976"/>
        <dbReference type="ChEBI" id="CHEBI:57540"/>
        <dbReference type="ChEBI" id="CHEBI:57945"/>
        <dbReference type="EC" id="7.1.1.2"/>
    </reaction>
</comment>
<comment type="subcellular location">
    <subcellularLocation>
        <location evidence="1">Mitochondrion membrane</location>
        <topology evidence="1">Multi-pass membrane protein</topology>
    </subcellularLocation>
</comment>
<comment type="similarity">
    <text evidence="3">Belongs to the complex I subunit 4 family.</text>
</comment>
<gene>
    <name type="primary">MT-ND4</name>
    <name type="synonym">MTND4</name>
    <name type="synonym">NADH4</name>
    <name type="synonym">ND4</name>
</gene>
<proteinExistence type="inferred from homology"/>
<organism>
    <name type="scientific">Bothrops erythromelas</name>
    <name type="common">Caatinga lance head</name>
    <dbReference type="NCBI Taxonomy" id="44710"/>
    <lineage>
        <taxon>Eukaryota</taxon>
        <taxon>Metazoa</taxon>
        <taxon>Chordata</taxon>
        <taxon>Craniata</taxon>
        <taxon>Vertebrata</taxon>
        <taxon>Euteleostomi</taxon>
        <taxon>Lepidosauria</taxon>
        <taxon>Squamata</taxon>
        <taxon>Bifurcata</taxon>
        <taxon>Unidentata</taxon>
        <taxon>Episquamata</taxon>
        <taxon>Toxicofera</taxon>
        <taxon>Serpentes</taxon>
        <taxon>Colubroidea</taxon>
        <taxon>Viperidae</taxon>
        <taxon>Crotalinae</taxon>
        <taxon>Bothrops</taxon>
    </lineage>
</organism>
<sequence>PIAGSMVLAAILLKLGGYGIIRMMQALPTTKTDMFLPFIVLALWGATLANLTCLQQTDLKSLIAYSSISHMGLVVATIIIQTPWGLSGAMALMIAHGFTSSALFCLANTTYERTHTRILILTRGFHNILPMATTWWLLANLMNIAIPPTMNFTGELLITSALFNWCPTTIIMLGLSMLITASYSLHMFLSTQMGPTPTNNQTEPTHSREHLLMVLHLTPLMMISLKPELII</sequence>
<accession>O03699</accession>
<name>NU4M_BOTER</name>
<dbReference type="EC" id="7.1.1.2"/>
<dbReference type="EMBL" id="U41877">
    <property type="protein sequence ID" value="AAB46634.1"/>
    <property type="molecule type" value="Genomic_DNA"/>
</dbReference>
<dbReference type="SMR" id="O03699"/>
<dbReference type="GO" id="GO:0031966">
    <property type="term" value="C:mitochondrial membrane"/>
    <property type="evidence" value="ECO:0007669"/>
    <property type="project" value="UniProtKB-SubCell"/>
</dbReference>
<dbReference type="GO" id="GO:0008137">
    <property type="term" value="F:NADH dehydrogenase (ubiquinone) activity"/>
    <property type="evidence" value="ECO:0007669"/>
    <property type="project" value="UniProtKB-EC"/>
</dbReference>
<dbReference type="GO" id="GO:0048039">
    <property type="term" value="F:ubiquinone binding"/>
    <property type="evidence" value="ECO:0007669"/>
    <property type="project" value="TreeGrafter"/>
</dbReference>
<dbReference type="GO" id="GO:0042773">
    <property type="term" value="P:ATP synthesis coupled electron transport"/>
    <property type="evidence" value="ECO:0007669"/>
    <property type="project" value="InterPro"/>
</dbReference>
<dbReference type="GO" id="GO:0015990">
    <property type="term" value="P:electron transport coupled proton transport"/>
    <property type="evidence" value="ECO:0007669"/>
    <property type="project" value="TreeGrafter"/>
</dbReference>
<dbReference type="InterPro" id="IPR003918">
    <property type="entry name" value="NADH_UbQ_OxRdtase"/>
</dbReference>
<dbReference type="InterPro" id="IPR001750">
    <property type="entry name" value="ND/Mrp_TM"/>
</dbReference>
<dbReference type="PANTHER" id="PTHR43507">
    <property type="entry name" value="NADH-UBIQUINONE OXIDOREDUCTASE CHAIN 4"/>
    <property type="match status" value="1"/>
</dbReference>
<dbReference type="PANTHER" id="PTHR43507:SF20">
    <property type="entry name" value="NADH-UBIQUINONE OXIDOREDUCTASE CHAIN 4"/>
    <property type="match status" value="1"/>
</dbReference>
<dbReference type="Pfam" id="PF00361">
    <property type="entry name" value="Proton_antipo_M"/>
    <property type="match status" value="1"/>
</dbReference>
<reference key="1">
    <citation type="journal article" date="1996" name="Copeia">
        <title>Crotaline intergeneric relationships based on mitochondrial DNA sequence data.</title>
        <authorList>
            <person name="Kraus F."/>
            <person name="Mink D.G."/>
            <person name="Brown W.M."/>
        </authorList>
    </citation>
    <scope>NUCLEOTIDE SEQUENCE [GENOMIC DNA]</scope>
</reference>
<protein>
    <recommendedName>
        <fullName>NADH-ubiquinone oxidoreductase chain 4</fullName>
        <ecNumber>7.1.1.2</ecNumber>
    </recommendedName>
    <alternativeName>
        <fullName>NADH dehydrogenase subunit 4</fullName>
    </alternativeName>
</protein>